<protein>
    <recommendedName>
        <fullName evidence="1">Multidrug resistance protein MdtC</fullName>
    </recommendedName>
    <alternativeName>
        <fullName evidence="1">Multidrug transporter MdtC</fullName>
    </alternativeName>
</protein>
<dbReference type="EMBL" id="CP000822">
    <property type="protein sequence ID" value="ABV11858.1"/>
    <property type="molecule type" value="Genomic_DNA"/>
</dbReference>
<dbReference type="RefSeq" id="WP_012131682.1">
    <property type="nucleotide sequence ID" value="NC_009792.1"/>
</dbReference>
<dbReference type="SMR" id="A8AEE5"/>
<dbReference type="STRING" id="290338.CKO_00705"/>
<dbReference type="GeneID" id="45134921"/>
<dbReference type="KEGG" id="cko:CKO_00705"/>
<dbReference type="HOGENOM" id="CLU_002755_1_2_6"/>
<dbReference type="OrthoDB" id="9757904at2"/>
<dbReference type="Proteomes" id="UP000008148">
    <property type="component" value="Chromosome"/>
</dbReference>
<dbReference type="GO" id="GO:0005886">
    <property type="term" value="C:plasma membrane"/>
    <property type="evidence" value="ECO:0007669"/>
    <property type="project" value="UniProtKB-SubCell"/>
</dbReference>
<dbReference type="GO" id="GO:0042910">
    <property type="term" value="F:xenobiotic transmembrane transporter activity"/>
    <property type="evidence" value="ECO:0007669"/>
    <property type="project" value="TreeGrafter"/>
</dbReference>
<dbReference type="FunFam" id="1.20.1640.10:FF:000001">
    <property type="entry name" value="Efflux pump membrane transporter"/>
    <property type="match status" value="1"/>
</dbReference>
<dbReference type="FunFam" id="3.30.70.1430:FF:000001">
    <property type="entry name" value="Efflux pump membrane transporter"/>
    <property type="match status" value="1"/>
</dbReference>
<dbReference type="FunFam" id="3.30.2090.10:FF:000004">
    <property type="entry name" value="Multidrug resistance protein MdtC"/>
    <property type="match status" value="1"/>
</dbReference>
<dbReference type="FunFam" id="3.30.2090.10:FF:000005">
    <property type="entry name" value="Multidrug resistance protein MdtC"/>
    <property type="match status" value="1"/>
</dbReference>
<dbReference type="FunFam" id="3.30.70.1430:FF:000004">
    <property type="entry name" value="Multidrug resistance protein MdtC"/>
    <property type="match status" value="1"/>
</dbReference>
<dbReference type="Gene3D" id="3.30.70.1430">
    <property type="entry name" value="Multidrug efflux transporter AcrB pore domain"/>
    <property type="match status" value="2"/>
</dbReference>
<dbReference type="Gene3D" id="3.30.70.1440">
    <property type="entry name" value="Multidrug efflux transporter AcrB pore domain"/>
    <property type="match status" value="1"/>
</dbReference>
<dbReference type="Gene3D" id="3.30.70.1320">
    <property type="entry name" value="Multidrug efflux transporter AcrB pore domain like"/>
    <property type="match status" value="1"/>
</dbReference>
<dbReference type="Gene3D" id="3.30.2090.10">
    <property type="entry name" value="Multidrug efflux transporter AcrB TolC docking domain, DN and DC subdomains"/>
    <property type="match status" value="2"/>
</dbReference>
<dbReference type="Gene3D" id="1.20.1640.10">
    <property type="entry name" value="Multidrug efflux transporter AcrB transmembrane domain"/>
    <property type="match status" value="2"/>
</dbReference>
<dbReference type="HAMAP" id="MF_01424">
    <property type="entry name" value="MdtC"/>
    <property type="match status" value="1"/>
</dbReference>
<dbReference type="InterPro" id="IPR027463">
    <property type="entry name" value="AcrB_DN_DC_subdom"/>
</dbReference>
<dbReference type="InterPro" id="IPR001036">
    <property type="entry name" value="Acrflvin-R"/>
</dbReference>
<dbReference type="InterPro" id="IPR023931">
    <property type="entry name" value="Multidrug-R_MdtC"/>
</dbReference>
<dbReference type="NCBIfam" id="NF007905">
    <property type="entry name" value="PRK10614.1"/>
    <property type="match status" value="1"/>
</dbReference>
<dbReference type="NCBIfam" id="NF033617">
    <property type="entry name" value="RND_permease_2"/>
    <property type="match status" value="1"/>
</dbReference>
<dbReference type="PANTHER" id="PTHR32063">
    <property type="match status" value="1"/>
</dbReference>
<dbReference type="PANTHER" id="PTHR32063:SF34">
    <property type="entry name" value="MULTIDRUG RESISTANCE PROTEIN MDTC"/>
    <property type="match status" value="1"/>
</dbReference>
<dbReference type="Pfam" id="PF00873">
    <property type="entry name" value="ACR_tran"/>
    <property type="match status" value="1"/>
</dbReference>
<dbReference type="PRINTS" id="PR00702">
    <property type="entry name" value="ACRIFLAVINRP"/>
</dbReference>
<dbReference type="SUPFAM" id="SSF82693">
    <property type="entry name" value="Multidrug efflux transporter AcrB pore domain, PN1, PN2, PC1 and PC2 subdomains"/>
    <property type="match status" value="4"/>
</dbReference>
<dbReference type="SUPFAM" id="SSF82714">
    <property type="entry name" value="Multidrug efflux transporter AcrB TolC docking domain, DN and DC subdomains"/>
    <property type="match status" value="2"/>
</dbReference>
<dbReference type="SUPFAM" id="SSF82866">
    <property type="entry name" value="Multidrug efflux transporter AcrB transmembrane domain"/>
    <property type="match status" value="2"/>
</dbReference>
<sequence length="1028" mass="111174">MKFFALFIYRPVATILISIAITLCGVLGFRLLPVAPLPQVDFPVIMVSASLPGASPETMASSVATPLERSLGRIAGVSEMTSSSSLGSTRIILQFNFDRDINGAARDVQAAINAAQSLLPSGMPSRPTYRKANPSDAPIMILTLTSDTWSQGELYDFASTQLAQTIAQIDGVGDVDVGGSSLPAVRVGLNPQALFNQGVSLDDVRSAISNANVRKPQGAIDDKTHRWQVQTNDELKTATEYQPLIIHYNNGAAVRLGDVATVTDSVQDVRNAGMTNAKPAILLMIRKLPEANIIQTVDSIREKLPELQTLIPASIDLQIAQDRSPTIRASLEEVEQTLVISVALVILVVFLFLRSGRATLIPAVAVPVSLIGTFAAMYLCGFSLNNLSLMALTIATGFVVDDAIVVLENISRHLEAGMKPLQAALQGTREVGFTVLSMSLSLVAVFLPLLLMGGLPGRLLREFAVTLSVAIGISLLVSLTLTPMMCGWMLKSSKPREQTRSRGFGRLLTGLQQGYGTSLKWVLNHTRLVGVVLLGTIALNIWLYISIPKTFFPEQDTGVLMGGIQADQSISFQAMRGKLQDFMKIIRDDPAVDNVTGFTGGSRVNSGMMFITLKSRGERHETAQQVIDRLRVALAKEPGANLFLMAVQDIRVGGRQANASYQYALLSDDLSALREWEPKIRKALAALPQLADVNSDQQDNGAEMNLIYDRETMSRLGIDVQAANSLLNNAFGQRQISTIYQPMNQYKVVMEVDSRYTQDISALEKMFVINSDGKAIPLSYFAKWQPANAPLSVNHQGLSAASTIAFNLPTGTSLSEATEAINRAMTQLGVPSTVRGSFAGTAQVFQETMNSQVILILAAIATVYIVLGILYESYVHPLTILSTLPSAGVGALLALELFNAPFSLIALIGIMLLIGIVKKNAIMMVDFALEAQRNGNLTPEQAIFQACLLRFRPIMMTTLAALFGALPLVISGGDGSELRQPLGITIVGGLVMSQLLTLYTTPVVYLFFDRLRLRFSRNNSQPESITEP</sequence>
<feature type="chain" id="PRO_1000024309" description="Multidrug resistance protein MdtC">
    <location>
        <begin position="1"/>
        <end position="1028"/>
    </location>
</feature>
<feature type="transmembrane region" description="Helical" evidence="1">
    <location>
        <begin position="3"/>
        <end position="23"/>
    </location>
</feature>
<feature type="transmembrane region" description="Helical" evidence="1">
    <location>
        <begin position="333"/>
        <end position="353"/>
    </location>
</feature>
<feature type="transmembrane region" description="Helical" evidence="1">
    <location>
        <begin position="360"/>
        <end position="380"/>
    </location>
</feature>
<feature type="transmembrane region" description="Helical" evidence="1">
    <location>
        <begin position="387"/>
        <end position="407"/>
    </location>
</feature>
<feature type="transmembrane region" description="Helical" evidence="1">
    <location>
        <begin position="431"/>
        <end position="451"/>
    </location>
</feature>
<feature type="transmembrane region" description="Helical" evidence="1">
    <location>
        <begin position="463"/>
        <end position="483"/>
    </location>
</feature>
<feature type="transmembrane region" description="Helical" evidence="1">
    <location>
        <begin position="528"/>
        <end position="548"/>
    </location>
</feature>
<feature type="transmembrane region" description="Helical" evidence="1">
    <location>
        <begin position="853"/>
        <end position="873"/>
    </location>
</feature>
<feature type="transmembrane region" description="Helical" evidence="1">
    <location>
        <begin position="875"/>
        <end position="895"/>
    </location>
</feature>
<feature type="transmembrane region" description="Helical" evidence="1">
    <location>
        <begin position="897"/>
        <end position="917"/>
    </location>
</feature>
<feature type="transmembrane region" description="Helical" evidence="1">
    <location>
        <begin position="953"/>
        <end position="973"/>
    </location>
</feature>
<feature type="transmembrane region" description="Helical" evidence="1">
    <location>
        <begin position="984"/>
        <end position="1004"/>
    </location>
</feature>
<evidence type="ECO:0000255" key="1">
    <source>
        <dbReference type="HAMAP-Rule" id="MF_01424"/>
    </source>
</evidence>
<accession>A8AEE5</accession>
<organism>
    <name type="scientific">Citrobacter koseri (strain ATCC BAA-895 / CDC 4225-83 / SGSC4696)</name>
    <dbReference type="NCBI Taxonomy" id="290338"/>
    <lineage>
        <taxon>Bacteria</taxon>
        <taxon>Pseudomonadati</taxon>
        <taxon>Pseudomonadota</taxon>
        <taxon>Gammaproteobacteria</taxon>
        <taxon>Enterobacterales</taxon>
        <taxon>Enterobacteriaceae</taxon>
        <taxon>Citrobacter</taxon>
    </lineage>
</organism>
<gene>
    <name evidence="1" type="primary">mdtC</name>
    <name type="ordered locus">CKO_00705</name>
</gene>
<keyword id="KW-0997">Cell inner membrane</keyword>
<keyword id="KW-1003">Cell membrane</keyword>
<keyword id="KW-0472">Membrane</keyword>
<keyword id="KW-1185">Reference proteome</keyword>
<keyword id="KW-0812">Transmembrane</keyword>
<keyword id="KW-1133">Transmembrane helix</keyword>
<keyword id="KW-0813">Transport</keyword>
<comment type="subunit">
    <text evidence="1">Part of a tripartite efflux system composed of MdtA, MdtB and MdtC. MdtC forms a heteromultimer with MdtB.</text>
</comment>
<comment type="subcellular location">
    <subcellularLocation>
        <location evidence="1">Cell inner membrane</location>
        <topology evidence="1">Multi-pass membrane protein</topology>
    </subcellularLocation>
</comment>
<comment type="similarity">
    <text evidence="1">Belongs to the resistance-nodulation-cell division (RND) (TC 2.A.6) family. MdtC subfamily.</text>
</comment>
<proteinExistence type="inferred from homology"/>
<name>MDTC_CITK8</name>
<reference key="1">
    <citation type="submission" date="2007-08" db="EMBL/GenBank/DDBJ databases">
        <authorList>
            <consortium name="The Citrobacter koseri Genome Sequencing Project"/>
            <person name="McClelland M."/>
            <person name="Sanderson E.K."/>
            <person name="Porwollik S."/>
            <person name="Spieth J."/>
            <person name="Clifton W.S."/>
            <person name="Latreille P."/>
            <person name="Courtney L."/>
            <person name="Wang C."/>
            <person name="Pepin K."/>
            <person name="Bhonagiri V."/>
            <person name="Nash W."/>
            <person name="Johnson M."/>
            <person name="Thiruvilangam P."/>
            <person name="Wilson R."/>
        </authorList>
    </citation>
    <scope>NUCLEOTIDE SEQUENCE [LARGE SCALE GENOMIC DNA]</scope>
    <source>
        <strain>ATCC BAA-895 / CDC 4225-83 / SGSC4696</strain>
    </source>
</reference>